<proteinExistence type="inferred from homology"/>
<protein>
    <recommendedName>
        <fullName evidence="1">Enolase</fullName>
        <ecNumber evidence="1">4.2.1.11</ecNumber>
    </recommendedName>
    <alternativeName>
        <fullName evidence="1">2-phospho-D-glycerate hydro-lyase</fullName>
    </alternativeName>
    <alternativeName>
        <fullName evidence="1">2-phosphoglycerate dehydratase</fullName>
    </alternativeName>
</protein>
<keyword id="KW-0963">Cytoplasm</keyword>
<keyword id="KW-0324">Glycolysis</keyword>
<keyword id="KW-0456">Lyase</keyword>
<keyword id="KW-0460">Magnesium</keyword>
<keyword id="KW-0479">Metal-binding</keyword>
<keyword id="KW-1185">Reference proteome</keyword>
<keyword id="KW-0964">Secreted</keyword>
<comment type="function">
    <text evidence="1">Catalyzes the reversible conversion of 2-phosphoglycerate (2-PG) into phosphoenolpyruvate (PEP). It is essential for the degradation of carbohydrates via glycolysis.</text>
</comment>
<comment type="catalytic activity">
    <reaction evidence="1">
        <text>(2R)-2-phosphoglycerate = phosphoenolpyruvate + H2O</text>
        <dbReference type="Rhea" id="RHEA:10164"/>
        <dbReference type="ChEBI" id="CHEBI:15377"/>
        <dbReference type="ChEBI" id="CHEBI:58289"/>
        <dbReference type="ChEBI" id="CHEBI:58702"/>
        <dbReference type="EC" id="4.2.1.11"/>
    </reaction>
</comment>
<comment type="cofactor">
    <cofactor evidence="1">
        <name>Mg(2+)</name>
        <dbReference type="ChEBI" id="CHEBI:18420"/>
    </cofactor>
    <text evidence="1">Binds a second Mg(2+) ion via substrate during catalysis.</text>
</comment>
<comment type="pathway">
    <text evidence="1">Carbohydrate degradation; glycolysis; pyruvate from D-glyceraldehyde 3-phosphate: step 4/5.</text>
</comment>
<comment type="subcellular location">
    <subcellularLocation>
        <location evidence="1">Cytoplasm</location>
    </subcellularLocation>
    <subcellularLocation>
        <location evidence="1">Secreted</location>
    </subcellularLocation>
    <subcellularLocation>
        <location evidence="1">Cell surface</location>
    </subcellularLocation>
    <text evidence="1">Fractions of enolase are present in both the cytoplasm and on the cell surface.</text>
</comment>
<comment type="similarity">
    <text evidence="1">Belongs to the enolase family.</text>
</comment>
<feature type="chain" id="PRO_1000205089" description="Enolase">
    <location>
        <begin position="1"/>
        <end position="423"/>
    </location>
</feature>
<feature type="active site" description="Proton donor" evidence="1">
    <location>
        <position position="205"/>
    </location>
</feature>
<feature type="active site" description="Proton acceptor" evidence="1">
    <location>
        <position position="337"/>
    </location>
</feature>
<feature type="binding site" evidence="1">
    <location>
        <position position="163"/>
    </location>
    <ligand>
        <name>(2R)-2-phosphoglycerate</name>
        <dbReference type="ChEBI" id="CHEBI:58289"/>
    </ligand>
</feature>
<feature type="binding site" evidence="1">
    <location>
        <position position="242"/>
    </location>
    <ligand>
        <name>Mg(2+)</name>
        <dbReference type="ChEBI" id="CHEBI:18420"/>
    </ligand>
</feature>
<feature type="binding site" evidence="1">
    <location>
        <position position="285"/>
    </location>
    <ligand>
        <name>Mg(2+)</name>
        <dbReference type="ChEBI" id="CHEBI:18420"/>
    </ligand>
</feature>
<feature type="binding site" evidence="1">
    <location>
        <position position="312"/>
    </location>
    <ligand>
        <name>Mg(2+)</name>
        <dbReference type="ChEBI" id="CHEBI:18420"/>
    </ligand>
</feature>
<feature type="binding site" evidence="1">
    <location>
        <position position="337"/>
    </location>
    <ligand>
        <name>(2R)-2-phosphoglycerate</name>
        <dbReference type="ChEBI" id="CHEBI:58289"/>
    </ligand>
</feature>
<feature type="binding site" evidence="1">
    <location>
        <position position="366"/>
    </location>
    <ligand>
        <name>(2R)-2-phosphoglycerate</name>
        <dbReference type="ChEBI" id="CHEBI:58289"/>
    </ligand>
</feature>
<feature type="binding site" evidence="1">
    <location>
        <position position="367"/>
    </location>
    <ligand>
        <name>(2R)-2-phosphoglycerate</name>
        <dbReference type="ChEBI" id="CHEBI:58289"/>
    </ligand>
</feature>
<feature type="binding site" evidence="1">
    <location>
        <position position="388"/>
    </location>
    <ligand>
        <name>(2R)-2-phosphoglycerate</name>
        <dbReference type="ChEBI" id="CHEBI:58289"/>
    </ligand>
</feature>
<accession>C0QI43</accession>
<evidence type="ECO:0000255" key="1">
    <source>
        <dbReference type="HAMAP-Rule" id="MF_00318"/>
    </source>
</evidence>
<reference key="1">
    <citation type="journal article" date="2009" name="Environ. Microbiol.">
        <title>Genome sequence of Desulfobacterium autotrophicum HRM2, a marine sulfate reducer oxidizing organic carbon completely to carbon dioxide.</title>
        <authorList>
            <person name="Strittmatter A.W."/>
            <person name="Liesegang H."/>
            <person name="Rabus R."/>
            <person name="Decker I."/>
            <person name="Amann J."/>
            <person name="Andres S."/>
            <person name="Henne A."/>
            <person name="Fricke W.F."/>
            <person name="Martinez-Arias R."/>
            <person name="Bartels D."/>
            <person name="Goesmann A."/>
            <person name="Krause L."/>
            <person name="Puehler A."/>
            <person name="Klenk H.P."/>
            <person name="Richter M."/>
            <person name="Schuler M."/>
            <person name="Gloeckner F.O."/>
            <person name="Meyerdierks A."/>
            <person name="Gottschalk G."/>
            <person name="Amann R."/>
        </authorList>
    </citation>
    <scope>NUCLEOTIDE SEQUENCE [LARGE SCALE GENOMIC DNA]</scope>
    <source>
        <strain>ATCC 43914 / DSM 3382 / VKM B-1955 / HRM2</strain>
    </source>
</reference>
<sequence>MTEIIDVKAREILDSRGNPTVEVDVVLACGVQGRAAVPSGASTGTREALEMRDQDASRFLGKGVLKAVANVNEVIAPEIIGFDTMDQAGLDRTMIDMDGTENKSRLGANAILGVSMAAARAAAKAAEIPLYRHIGGINARILPVPMMNIINGGAHAPNNLDIQEFMILPFGAPSLCEAVRMGAETFHTLKKILKKEGLSTAVGDEGGFAPNLKSNEEAIEFIIRAIEEAGYRPGKDIGIALDAAASEFYKNGKYVFESEGQVLTSEELVDYYESLVTRYALYSIEDGLAEQDWTGWQMMTKRLGDSLQIVGDDVFVTNPDIFRKGISEGIGNSILIKLNQIGTVTETLDTIQMAKESGYTTVISHRSGETEDTFIADLAVAVNAGQIKTGSLSRSDRVAKYNQLIRIEEALGMGGIFPEDLFV</sequence>
<organism>
    <name type="scientific">Desulforapulum autotrophicum (strain ATCC 43914 / DSM 3382 / VKM B-1955 / HRM2)</name>
    <name type="common">Desulfobacterium autotrophicum</name>
    <dbReference type="NCBI Taxonomy" id="177437"/>
    <lineage>
        <taxon>Bacteria</taxon>
        <taxon>Pseudomonadati</taxon>
        <taxon>Thermodesulfobacteriota</taxon>
        <taxon>Desulfobacteria</taxon>
        <taxon>Desulfobacterales</taxon>
        <taxon>Desulfobacteraceae</taxon>
        <taxon>Desulforapulum</taxon>
    </lineage>
</organism>
<dbReference type="EC" id="4.2.1.11" evidence="1"/>
<dbReference type="EMBL" id="CP001087">
    <property type="protein sequence ID" value="ACN15779.1"/>
    <property type="molecule type" value="Genomic_DNA"/>
</dbReference>
<dbReference type="RefSeq" id="WP_015904542.1">
    <property type="nucleotide sequence ID" value="NC_012108.1"/>
</dbReference>
<dbReference type="SMR" id="C0QI43"/>
<dbReference type="STRING" id="177437.HRM2_26850"/>
<dbReference type="KEGG" id="dat:HRM2_26850"/>
<dbReference type="eggNOG" id="COG0148">
    <property type="taxonomic scope" value="Bacteria"/>
</dbReference>
<dbReference type="HOGENOM" id="CLU_031223_2_1_7"/>
<dbReference type="OrthoDB" id="9804716at2"/>
<dbReference type="UniPathway" id="UPA00109">
    <property type="reaction ID" value="UER00187"/>
</dbReference>
<dbReference type="Proteomes" id="UP000000442">
    <property type="component" value="Chromosome"/>
</dbReference>
<dbReference type="GO" id="GO:0009986">
    <property type="term" value="C:cell surface"/>
    <property type="evidence" value="ECO:0007669"/>
    <property type="project" value="UniProtKB-SubCell"/>
</dbReference>
<dbReference type="GO" id="GO:0005576">
    <property type="term" value="C:extracellular region"/>
    <property type="evidence" value="ECO:0007669"/>
    <property type="project" value="UniProtKB-SubCell"/>
</dbReference>
<dbReference type="GO" id="GO:0000015">
    <property type="term" value="C:phosphopyruvate hydratase complex"/>
    <property type="evidence" value="ECO:0007669"/>
    <property type="project" value="InterPro"/>
</dbReference>
<dbReference type="GO" id="GO:0000287">
    <property type="term" value="F:magnesium ion binding"/>
    <property type="evidence" value="ECO:0007669"/>
    <property type="project" value="UniProtKB-UniRule"/>
</dbReference>
<dbReference type="GO" id="GO:0004634">
    <property type="term" value="F:phosphopyruvate hydratase activity"/>
    <property type="evidence" value="ECO:0007669"/>
    <property type="project" value="UniProtKB-UniRule"/>
</dbReference>
<dbReference type="GO" id="GO:0006096">
    <property type="term" value="P:glycolytic process"/>
    <property type="evidence" value="ECO:0007669"/>
    <property type="project" value="UniProtKB-UniRule"/>
</dbReference>
<dbReference type="CDD" id="cd03313">
    <property type="entry name" value="enolase"/>
    <property type="match status" value="1"/>
</dbReference>
<dbReference type="FunFam" id="3.20.20.120:FF:000001">
    <property type="entry name" value="Enolase"/>
    <property type="match status" value="1"/>
</dbReference>
<dbReference type="FunFam" id="3.30.390.10:FF:000001">
    <property type="entry name" value="Enolase"/>
    <property type="match status" value="1"/>
</dbReference>
<dbReference type="Gene3D" id="3.20.20.120">
    <property type="entry name" value="Enolase-like C-terminal domain"/>
    <property type="match status" value="1"/>
</dbReference>
<dbReference type="Gene3D" id="3.30.390.10">
    <property type="entry name" value="Enolase-like, N-terminal domain"/>
    <property type="match status" value="1"/>
</dbReference>
<dbReference type="HAMAP" id="MF_00318">
    <property type="entry name" value="Enolase"/>
    <property type="match status" value="1"/>
</dbReference>
<dbReference type="InterPro" id="IPR000941">
    <property type="entry name" value="Enolase"/>
</dbReference>
<dbReference type="InterPro" id="IPR036849">
    <property type="entry name" value="Enolase-like_C_sf"/>
</dbReference>
<dbReference type="InterPro" id="IPR029017">
    <property type="entry name" value="Enolase-like_N"/>
</dbReference>
<dbReference type="InterPro" id="IPR020810">
    <property type="entry name" value="Enolase_C"/>
</dbReference>
<dbReference type="InterPro" id="IPR020809">
    <property type="entry name" value="Enolase_CS"/>
</dbReference>
<dbReference type="InterPro" id="IPR020811">
    <property type="entry name" value="Enolase_N"/>
</dbReference>
<dbReference type="NCBIfam" id="TIGR01060">
    <property type="entry name" value="eno"/>
    <property type="match status" value="1"/>
</dbReference>
<dbReference type="PANTHER" id="PTHR11902">
    <property type="entry name" value="ENOLASE"/>
    <property type="match status" value="1"/>
</dbReference>
<dbReference type="PANTHER" id="PTHR11902:SF1">
    <property type="entry name" value="ENOLASE"/>
    <property type="match status" value="1"/>
</dbReference>
<dbReference type="Pfam" id="PF00113">
    <property type="entry name" value="Enolase_C"/>
    <property type="match status" value="1"/>
</dbReference>
<dbReference type="Pfam" id="PF03952">
    <property type="entry name" value="Enolase_N"/>
    <property type="match status" value="1"/>
</dbReference>
<dbReference type="PIRSF" id="PIRSF001400">
    <property type="entry name" value="Enolase"/>
    <property type="match status" value="1"/>
</dbReference>
<dbReference type="PRINTS" id="PR00148">
    <property type="entry name" value="ENOLASE"/>
</dbReference>
<dbReference type="SFLD" id="SFLDF00002">
    <property type="entry name" value="enolase"/>
    <property type="match status" value="1"/>
</dbReference>
<dbReference type="SFLD" id="SFLDG00178">
    <property type="entry name" value="enolase"/>
    <property type="match status" value="1"/>
</dbReference>
<dbReference type="SMART" id="SM01192">
    <property type="entry name" value="Enolase_C"/>
    <property type="match status" value="1"/>
</dbReference>
<dbReference type="SMART" id="SM01193">
    <property type="entry name" value="Enolase_N"/>
    <property type="match status" value="1"/>
</dbReference>
<dbReference type="SUPFAM" id="SSF51604">
    <property type="entry name" value="Enolase C-terminal domain-like"/>
    <property type="match status" value="1"/>
</dbReference>
<dbReference type="SUPFAM" id="SSF54826">
    <property type="entry name" value="Enolase N-terminal domain-like"/>
    <property type="match status" value="1"/>
</dbReference>
<dbReference type="PROSITE" id="PS00164">
    <property type="entry name" value="ENOLASE"/>
    <property type="match status" value="1"/>
</dbReference>
<gene>
    <name evidence="1" type="primary">eno</name>
    <name type="ordered locus">HRM2_26850</name>
</gene>
<name>ENO_DESAH</name>